<sequence length="322" mass="35121">MDTSSINAQSIFDDNAATLKLSWLTGHEGWERGFSADTVGNATSSADLVGHLNLIHPNRIQVLGEAEIDYYQRQTDEDRSRHMAELIALEPPFLVVAGGAAAPPELVLRCTRSSTPLFTTPMSAAAVIDSLRLYMSRILAPRATLHGVFLDILGMGVLLTGDSGLGKSELGLELISRGHGLVADDAVDFVRLGPDFVEGRCPPLLQNLLEVRGLGLLDIKTIFGETAVRRKMKLKLIVQLVRRPDGEFQRLPLESQTVDVLGLPISKVTIQVAAGRNLAVLVEAAVRNTILQLRGIDTLRDFMDRQRLAMQDPDSQFPGKLV</sequence>
<accession>A0KAL7</accession>
<gene>
    <name evidence="1" type="primary">hprK</name>
    <name type="ordered locus">Bcen2424_2794</name>
</gene>
<comment type="function">
    <text evidence="1">Catalyzes the ATP- as well as the pyrophosphate-dependent phosphorylation of a specific serine residue in HPr, a phosphocarrier protein of the phosphoenolpyruvate-dependent sugar phosphotransferase system (PTS). HprK/P also catalyzes the pyrophosphate-producing, inorganic phosphate-dependent dephosphorylation (phosphorolysis) of seryl-phosphorylated HPr (P-Ser-HPr).</text>
</comment>
<comment type="catalytic activity">
    <reaction evidence="1">
        <text>[HPr protein]-L-serine + ATP = [HPr protein]-O-phospho-L-serine + ADP + H(+)</text>
        <dbReference type="Rhea" id="RHEA:46600"/>
        <dbReference type="Rhea" id="RHEA-COMP:11602"/>
        <dbReference type="Rhea" id="RHEA-COMP:11603"/>
        <dbReference type="ChEBI" id="CHEBI:15378"/>
        <dbReference type="ChEBI" id="CHEBI:29999"/>
        <dbReference type="ChEBI" id="CHEBI:30616"/>
        <dbReference type="ChEBI" id="CHEBI:83421"/>
        <dbReference type="ChEBI" id="CHEBI:456216"/>
    </reaction>
</comment>
<comment type="catalytic activity">
    <reaction evidence="1">
        <text>[HPr protein]-O-phospho-L-serine + phosphate + H(+) = [HPr protein]-L-serine + diphosphate</text>
        <dbReference type="Rhea" id="RHEA:46604"/>
        <dbReference type="Rhea" id="RHEA-COMP:11602"/>
        <dbReference type="Rhea" id="RHEA-COMP:11603"/>
        <dbReference type="ChEBI" id="CHEBI:15378"/>
        <dbReference type="ChEBI" id="CHEBI:29999"/>
        <dbReference type="ChEBI" id="CHEBI:33019"/>
        <dbReference type="ChEBI" id="CHEBI:43474"/>
        <dbReference type="ChEBI" id="CHEBI:83421"/>
    </reaction>
</comment>
<comment type="cofactor">
    <cofactor evidence="1">
        <name>Mg(2+)</name>
        <dbReference type="ChEBI" id="CHEBI:18420"/>
    </cofactor>
</comment>
<comment type="subunit">
    <text evidence="1">Homohexamer.</text>
</comment>
<comment type="domain">
    <text evidence="1">The Walker A ATP-binding motif also binds Pi and PPi.</text>
</comment>
<comment type="miscellaneous">
    <text evidence="1">Both phosphorylation and phosphorolysis are carried out by the same active site and suggest a common mechanism for both reactions.</text>
</comment>
<comment type="similarity">
    <text evidence="1">Belongs to the HPrK/P family.</text>
</comment>
<keyword id="KW-0067">ATP-binding</keyword>
<keyword id="KW-0418">Kinase</keyword>
<keyword id="KW-0460">Magnesium</keyword>
<keyword id="KW-0479">Metal-binding</keyword>
<keyword id="KW-0511">Multifunctional enzyme</keyword>
<keyword id="KW-0547">Nucleotide-binding</keyword>
<keyword id="KW-0723">Serine/threonine-protein kinase</keyword>
<keyword id="KW-0808">Transferase</keyword>
<organism>
    <name type="scientific">Burkholderia cenocepacia (strain HI2424)</name>
    <dbReference type="NCBI Taxonomy" id="331272"/>
    <lineage>
        <taxon>Bacteria</taxon>
        <taxon>Pseudomonadati</taxon>
        <taxon>Pseudomonadota</taxon>
        <taxon>Betaproteobacteria</taxon>
        <taxon>Burkholderiales</taxon>
        <taxon>Burkholderiaceae</taxon>
        <taxon>Burkholderia</taxon>
        <taxon>Burkholderia cepacia complex</taxon>
    </lineage>
</organism>
<protein>
    <recommendedName>
        <fullName evidence="1">HPr kinase/phosphorylase</fullName>
        <shortName evidence="1">HPrK/P</shortName>
        <ecNumber evidence="1">2.7.11.-</ecNumber>
        <ecNumber evidence="1">2.7.4.-</ecNumber>
    </recommendedName>
    <alternativeName>
        <fullName evidence="1">HPr(Ser) kinase/phosphorylase</fullName>
    </alternativeName>
</protein>
<dbReference type="EC" id="2.7.11.-" evidence="1"/>
<dbReference type="EC" id="2.7.4.-" evidence="1"/>
<dbReference type="EMBL" id="CP000458">
    <property type="protein sequence ID" value="ABK09544.1"/>
    <property type="molecule type" value="Genomic_DNA"/>
</dbReference>
<dbReference type="RefSeq" id="WP_006483133.1">
    <property type="nucleotide sequence ID" value="NC_008542.1"/>
</dbReference>
<dbReference type="SMR" id="A0KAL7"/>
<dbReference type="GeneID" id="98103899"/>
<dbReference type="KEGG" id="bch:Bcen2424_2794"/>
<dbReference type="HOGENOM" id="CLU_052030_0_2_4"/>
<dbReference type="GO" id="GO:0005524">
    <property type="term" value="F:ATP binding"/>
    <property type="evidence" value="ECO:0007669"/>
    <property type="project" value="UniProtKB-UniRule"/>
</dbReference>
<dbReference type="GO" id="GO:0000287">
    <property type="term" value="F:magnesium ion binding"/>
    <property type="evidence" value="ECO:0007669"/>
    <property type="project" value="UniProtKB-UniRule"/>
</dbReference>
<dbReference type="GO" id="GO:0000155">
    <property type="term" value="F:phosphorelay sensor kinase activity"/>
    <property type="evidence" value="ECO:0007669"/>
    <property type="project" value="InterPro"/>
</dbReference>
<dbReference type="GO" id="GO:0004674">
    <property type="term" value="F:protein serine/threonine kinase activity"/>
    <property type="evidence" value="ECO:0007669"/>
    <property type="project" value="UniProtKB-KW"/>
</dbReference>
<dbReference type="GO" id="GO:0004712">
    <property type="term" value="F:protein serine/threonine/tyrosine kinase activity"/>
    <property type="evidence" value="ECO:0007669"/>
    <property type="project" value="UniProtKB-UniRule"/>
</dbReference>
<dbReference type="GO" id="GO:0006109">
    <property type="term" value="P:regulation of carbohydrate metabolic process"/>
    <property type="evidence" value="ECO:0007669"/>
    <property type="project" value="UniProtKB-UniRule"/>
</dbReference>
<dbReference type="CDD" id="cd01918">
    <property type="entry name" value="HprK_C"/>
    <property type="match status" value="1"/>
</dbReference>
<dbReference type="FunFam" id="3.40.50.300:FF:000174">
    <property type="entry name" value="HPr kinase/phosphorylase"/>
    <property type="match status" value="1"/>
</dbReference>
<dbReference type="Gene3D" id="3.40.1390.20">
    <property type="entry name" value="HprK N-terminal domain-like"/>
    <property type="match status" value="1"/>
</dbReference>
<dbReference type="Gene3D" id="3.40.50.300">
    <property type="entry name" value="P-loop containing nucleotide triphosphate hydrolases"/>
    <property type="match status" value="1"/>
</dbReference>
<dbReference type="HAMAP" id="MF_01249">
    <property type="entry name" value="HPr_kinase"/>
    <property type="match status" value="1"/>
</dbReference>
<dbReference type="InterPro" id="IPR003755">
    <property type="entry name" value="HPr(Ser)_kin/Pase"/>
</dbReference>
<dbReference type="InterPro" id="IPR011104">
    <property type="entry name" value="Hpr_kin/Pase_C"/>
</dbReference>
<dbReference type="InterPro" id="IPR011126">
    <property type="entry name" value="Hpr_kin/Pase_Hpr_N"/>
</dbReference>
<dbReference type="InterPro" id="IPR027417">
    <property type="entry name" value="P-loop_NTPase"/>
</dbReference>
<dbReference type="InterPro" id="IPR028979">
    <property type="entry name" value="Ser_kin/Pase_Hpr-like_N_sf"/>
</dbReference>
<dbReference type="NCBIfam" id="TIGR00679">
    <property type="entry name" value="hpr-ser"/>
    <property type="match status" value="1"/>
</dbReference>
<dbReference type="PANTHER" id="PTHR30305:SF1">
    <property type="entry name" value="HPR KINASE_PHOSPHORYLASE"/>
    <property type="match status" value="1"/>
</dbReference>
<dbReference type="PANTHER" id="PTHR30305">
    <property type="entry name" value="PROTEIN YJDM-RELATED"/>
    <property type="match status" value="1"/>
</dbReference>
<dbReference type="Pfam" id="PF07475">
    <property type="entry name" value="Hpr_kinase_C"/>
    <property type="match status" value="1"/>
</dbReference>
<dbReference type="Pfam" id="PF02603">
    <property type="entry name" value="Hpr_kinase_N"/>
    <property type="match status" value="1"/>
</dbReference>
<dbReference type="SUPFAM" id="SSF75138">
    <property type="entry name" value="HprK N-terminal domain-like"/>
    <property type="match status" value="1"/>
</dbReference>
<dbReference type="SUPFAM" id="SSF53795">
    <property type="entry name" value="PEP carboxykinase-like"/>
    <property type="match status" value="1"/>
</dbReference>
<reference key="1">
    <citation type="submission" date="2006-08" db="EMBL/GenBank/DDBJ databases">
        <title>Complete sequence of chromosome 1 of Burkholderia cenocepacia HI2424.</title>
        <authorList>
            <person name="Copeland A."/>
            <person name="Lucas S."/>
            <person name="Lapidus A."/>
            <person name="Barry K."/>
            <person name="Detter J.C."/>
            <person name="Glavina del Rio T."/>
            <person name="Hammon N."/>
            <person name="Israni S."/>
            <person name="Pitluck S."/>
            <person name="Chain P."/>
            <person name="Malfatti S."/>
            <person name="Shin M."/>
            <person name="Vergez L."/>
            <person name="Schmutz J."/>
            <person name="Larimer F."/>
            <person name="Land M."/>
            <person name="Hauser L."/>
            <person name="Kyrpides N."/>
            <person name="Kim E."/>
            <person name="LiPuma J.J."/>
            <person name="Gonzalez C.F."/>
            <person name="Konstantinidis K."/>
            <person name="Tiedje J.M."/>
            <person name="Richardson P."/>
        </authorList>
    </citation>
    <scope>NUCLEOTIDE SEQUENCE [LARGE SCALE GENOMIC DNA]</scope>
    <source>
        <strain>HI2424</strain>
    </source>
</reference>
<name>HPRK_BURCH</name>
<evidence type="ECO:0000255" key="1">
    <source>
        <dbReference type="HAMAP-Rule" id="MF_01249"/>
    </source>
</evidence>
<proteinExistence type="inferred from homology"/>
<feature type="chain" id="PRO_1000067128" description="HPr kinase/phosphorylase">
    <location>
        <begin position="1"/>
        <end position="322"/>
    </location>
</feature>
<feature type="region of interest" description="Important for the catalytic mechanism of both phosphorylation and dephosphorylation" evidence="1">
    <location>
        <begin position="209"/>
        <end position="218"/>
    </location>
</feature>
<feature type="region of interest" description="Important for the catalytic mechanism of dephosphorylation" evidence="1">
    <location>
        <begin position="271"/>
        <end position="276"/>
    </location>
</feature>
<feature type="active site" evidence="1">
    <location>
        <position position="146"/>
    </location>
</feature>
<feature type="active site" evidence="1">
    <location>
        <position position="167"/>
    </location>
</feature>
<feature type="active site" description="Proton acceptor; for phosphorylation activity. Proton donor; for dephosphorylation activity" evidence="1">
    <location>
        <position position="185"/>
    </location>
</feature>
<feature type="active site" evidence="1">
    <location>
        <position position="250"/>
    </location>
</feature>
<feature type="binding site" evidence="1">
    <location>
        <begin position="161"/>
        <end position="168"/>
    </location>
    <ligand>
        <name>ATP</name>
        <dbReference type="ChEBI" id="CHEBI:30616"/>
    </ligand>
</feature>
<feature type="binding site" evidence="1">
    <location>
        <position position="168"/>
    </location>
    <ligand>
        <name>Mg(2+)</name>
        <dbReference type="ChEBI" id="CHEBI:18420"/>
    </ligand>
</feature>
<feature type="binding site" evidence="1">
    <location>
        <position position="210"/>
    </location>
    <ligand>
        <name>Mg(2+)</name>
        <dbReference type="ChEBI" id="CHEBI:18420"/>
    </ligand>
</feature>